<accession>P19015</accession>
<sequence>VLSANDKSNVKAAWGKVGNHAPEYGAEALERMFLSFPTTKTYFPHFDLSHGSSQVKAHGKKVADALTKAVGHLDDLPGALSDLSDLHAHKLRVDPVNFKLLSHCLLVTLAAHHPSDFTPAAHASLDKFLANVSTVLTSKYR</sequence>
<dbReference type="SMR" id="P19015"/>
<dbReference type="GO" id="GO:0072562">
    <property type="term" value="C:blood microparticle"/>
    <property type="evidence" value="ECO:0007669"/>
    <property type="project" value="TreeGrafter"/>
</dbReference>
<dbReference type="GO" id="GO:0031838">
    <property type="term" value="C:haptoglobin-hemoglobin complex"/>
    <property type="evidence" value="ECO:0007669"/>
    <property type="project" value="TreeGrafter"/>
</dbReference>
<dbReference type="GO" id="GO:0005833">
    <property type="term" value="C:hemoglobin complex"/>
    <property type="evidence" value="ECO:0007669"/>
    <property type="project" value="InterPro"/>
</dbReference>
<dbReference type="GO" id="GO:0031720">
    <property type="term" value="F:haptoglobin binding"/>
    <property type="evidence" value="ECO:0007669"/>
    <property type="project" value="TreeGrafter"/>
</dbReference>
<dbReference type="GO" id="GO:0020037">
    <property type="term" value="F:heme binding"/>
    <property type="evidence" value="ECO:0007669"/>
    <property type="project" value="InterPro"/>
</dbReference>
<dbReference type="GO" id="GO:0005506">
    <property type="term" value="F:iron ion binding"/>
    <property type="evidence" value="ECO:0007669"/>
    <property type="project" value="InterPro"/>
</dbReference>
<dbReference type="GO" id="GO:0043177">
    <property type="term" value="F:organic acid binding"/>
    <property type="evidence" value="ECO:0007669"/>
    <property type="project" value="TreeGrafter"/>
</dbReference>
<dbReference type="GO" id="GO:0019825">
    <property type="term" value="F:oxygen binding"/>
    <property type="evidence" value="ECO:0007669"/>
    <property type="project" value="InterPro"/>
</dbReference>
<dbReference type="GO" id="GO:0005344">
    <property type="term" value="F:oxygen carrier activity"/>
    <property type="evidence" value="ECO:0007669"/>
    <property type="project" value="UniProtKB-KW"/>
</dbReference>
<dbReference type="GO" id="GO:0004601">
    <property type="term" value="F:peroxidase activity"/>
    <property type="evidence" value="ECO:0007669"/>
    <property type="project" value="TreeGrafter"/>
</dbReference>
<dbReference type="GO" id="GO:0042744">
    <property type="term" value="P:hydrogen peroxide catabolic process"/>
    <property type="evidence" value="ECO:0007669"/>
    <property type="project" value="TreeGrafter"/>
</dbReference>
<dbReference type="CDD" id="cd08927">
    <property type="entry name" value="Hb-alpha-like"/>
    <property type="match status" value="1"/>
</dbReference>
<dbReference type="FunFam" id="1.10.490.10:FF:000002">
    <property type="entry name" value="Hemoglobin subunit alpha"/>
    <property type="match status" value="1"/>
</dbReference>
<dbReference type="Gene3D" id="1.10.490.10">
    <property type="entry name" value="Globins"/>
    <property type="match status" value="1"/>
</dbReference>
<dbReference type="InterPro" id="IPR000971">
    <property type="entry name" value="Globin"/>
</dbReference>
<dbReference type="InterPro" id="IPR009050">
    <property type="entry name" value="Globin-like_sf"/>
</dbReference>
<dbReference type="InterPro" id="IPR012292">
    <property type="entry name" value="Globin/Proto"/>
</dbReference>
<dbReference type="InterPro" id="IPR002338">
    <property type="entry name" value="Hemoglobin_a-typ"/>
</dbReference>
<dbReference type="InterPro" id="IPR050056">
    <property type="entry name" value="Hemoglobin_oxygen_transport"/>
</dbReference>
<dbReference type="InterPro" id="IPR002339">
    <property type="entry name" value="Hemoglobin_pi"/>
</dbReference>
<dbReference type="PANTHER" id="PTHR11442">
    <property type="entry name" value="HEMOGLOBIN FAMILY MEMBER"/>
    <property type="match status" value="1"/>
</dbReference>
<dbReference type="PANTHER" id="PTHR11442:SF48">
    <property type="entry name" value="HEMOGLOBIN SUBUNIT ALPHA"/>
    <property type="match status" value="1"/>
</dbReference>
<dbReference type="Pfam" id="PF00042">
    <property type="entry name" value="Globin"/>
    <property type="match status" value="1"/>
</dbReference>
<dbReference type="PRINTS" id="PR00612">
    <property type="entry name" value="ALPHAHAEM"/>
</dbReference>
<dbReference type="PRINTS" id="PR00815">
    <property type="entry name" value="PIHAEM"/>
</dbReference>
<dbReference type="SUPFAM" id="SSF46458">
    <property type="entry name" value="Globin-like"/>
    <property type="match status" value="1"/>
</dbReference>
<dbReference type="PROSITE" id="PS01033">
    <property type="entry name" value="GLOBIN"/>
    <property type="match status" value="1"/>
</dbReference>
<name>HBA_HIPAM</name>
<evidence type="ECO:0000250" key="1">
    <source>
        <dbReference type="UniProtKB" id="P01942"/>
    </source>
</evidence>
<evidence type="ECO:0000250" key="2">
    <source>
        <dbReference type="UniProtKB" id="P01946"/>
    </source>
</evidence>
<evidence type="ECO:0000250" key="3">
    <source>
        <dbReference type="UniProtKB" id="P69905"/>
    </source>
</evidence>
<evidence type="ECO:0000255" key="4">
    <source>
        <dbReference type="PROSITE-ProRule" id="PRU00238"/>
    </source>
</evidence>
<comment type="function">
    <text>Involved in oxygen transport from the lung to the various peripheral tissues.</text>
</comment>
<comment type="function">
    <molecule>Hemopressin</molecule>
    <text evidence="2">Hemopressin acts as an antagonist peptide of the cannabinoid receptor CNR1. Hemopressin-binding efficiently blocks cannabinoid receptor CNR1 and subsequent signaling.</text>
</comment>
<comment type="subunit">
    <text>Heterotetramer of two alpha chains and two beta chains.</text>
</comment>
<comment type="tissue specificity">
    <text>Red blood cells.</text>
</comment>
<comment type="similarity">
    <text evidence="4">Belongs to the globin family.</text>
</comment>
<reference key="1">
    <citation type="journal article" date="1983" name="S. Afr. J. Sci.">
        <title>Amino acid sequence of haemoglobin of hippopotamus (Hippopotamus amphibius, Artiodactyla).</title>
        <authorList>
            <person name="Braunitzer G."/>
            <person name="Wright P.G."/>
            <person name="Stangl A."/>
            <person name="Schrank B."/>
            <person name="Krombach C."/>
        </authorList>
    </citation>
    <scope>PROTEIN SEQUENCE</scope>
</reference>
<gene>
    <name type="primary">HBA</name>
</gene>
<proteinExistence type="evidence at protein level"/>
<feature type="chain" id="PRO_0000052650" description="Hemoglobin subunit alpha">
    <location>
        <begin position="1"/>
        <end position="141"/>
    </location>
</feature>
<feature type="peptide" id="PRO_0000455880" description="Hemopressin" evidence="2">
    <location>
        <begin position="95"/>
        <end position="103"/>
    </location>
</feature>
<feature type="domain" description="Globin" evidence="4">
    <location>
        <begin position="1"/>
        <end position="141"/>
    </location>
</feature>
<feature type="binding site" evidence="4">
    <location>
        <position position="58"/>
    </location>
    <ligand>
        <name>O2</name>
        <dbReference type="ChEBI" id="CHEBI:15379"/>
    </ligand>
</feature>
<feature type="binding site" description="proximal binding residue" evidence="4">
    <location>
        <position position="87"/>
    </location>
    <ligand>
        <name>heme b</name>
        <dbReference type="ChEBI" id="CHEBI:60344"/>
    </ligand>
    <ligandPart>
        <name>Fe</name>
        <dbReference type="ChEBI" id="CHEBI:18248"/>
    </ligandPart>
</feature>
<feature type="modified residue" description="Phosphoserine" evidence="3">
    <location>
        <position position="3"/>
    </location>
</feature>
<feature type="modified residue" description="N6-succinyllysine" evidence="1">
    <location>
        <position position="7"/>
    </location>
</feature>
<feature type="modified residue" description="N6-succinyllysine" evidence="1">
    <location>
        <position position="11"/>
    </location>
</feature>
<feature type="modified residue" description="N6-acetyllysine; alternate" evidence="3">
    <location>
        <position position="16"/>
    </location>
</feature>
<feature type="modified residue" description="N6-succinyllysine; alternate" evidence="1">
    <location>
        <position position="16"/>
    </location>
</feature>
<feature type="modified residue" description="Phosphotyrosine" evidence="3">
    <location>
        <position position="24"/>
    </location>
</feature>
<feature type="modified residue" description="Phosphoserine" evidence="3">
    <location>
        <position position="35"/>
    </location>
</feature>
<feature type="modified residue" description="N6-succinyllysine" evidence="1">
    <location>
        <position position="40"/>
    </location>
</feature>
<feature type="modified residue" description="Phosphoserine" evidence="3">
    <location>
        <position position="49"/>
    </location>
</feature>
<feature type="modified residue" description="Phosphoserine" evidence="1">
    <location>
        <position position="102"/>
    </location>
</feature>
<feature type="modified residue" description="Phosphothreonine" evidence="1">
    <location>
        <position position="108"/>
    </location>
</feature>
<feature type="modified residue" description="Phosphoserine" evidence="1">
    <location>
        <position position="124"/>
    </location>
</feature>
<feature type="modified residue" description="Phosphothreonine" evidence="1">
    <location>
        <position position="134"/>
    </location>
</feature>
<feature type="modified residue" description="Phosphothreonine" evidence="1">
    <location>
        <position position="137"/>
    </location>
</feature>
<feature type="modified residue" description="Phosphoserine" evidence="1">
    <location>
        <position position="138"/>
    </location>
</feature>
<keyword id="KW-0007">Acetylation</keyword>
<keyword id="KW-0903">Direct protein sequencing</keyword>
<keyword id="KW-0349">Heme</keyword>
<keyword id="KW-0408">Iron</keyword>
<keyword id="KW-0479">Metal-binding</keyword>
<keyword id="KW-0561">Oxygen transport</keyword>
<keyword id="KW-0597">Phosphoprotein</keyword>
<keyword id="KW-0813">Transport</keyword>
<protein>
    <recommendedName>
        <fullName>Hemoglobin subunit alpha</fullName>
    </recommendedName>
    <alternativeName>
        <fullName>Alpha-globin</fullName>
    </alternativeName>
    <alternativeName>
        <fullName>Hemoglobin alpha chain</fullName>
    </alternativeName>
    <component>
        <recommendedName>
            <fullName evidence="2">Hemopressin</fullName>
        </recommendedName>
    </component>
</protein>
<organism>
    <name type="scientific">Hippopotamus amphibius</name>
    <name type="common">Hippopotamus</name>
    <dbReference type="NCBI Taxonomy" id="9833"/>
    <lineage>
        <taxon>Eukaryota</taxon>
        <taxon>Metazoa</taxon>
        <taxon>Chordata</taxon>
        <taxon>Craniata</taxon>
        <taxon>Vertebrata</taxon>
        <taxon>Euteleostomi</taxon>
        <taxon>Mammalia</taxon>
        <taxon>Eutheria</taxon>
        <taxon>Laurasiatheria</taxon>
        <taxon>Artiodactyla</taxon>
        <taxon>Whippomorpha</taxon>
        <taxon>Ancodonta</taxon>
        <taxon>Hippopotamidae</taxon>
        <taxon>Hippopotamus</taxon>
    </lineage>
</organism>